<organism>
    <name type="scientific">Granulibacter bethesdensis (strain ATCC BAA-1260 / CGDNIH1)</name>
    <dbReference type="NCBI Taxonomy" id="391165"/>
    <lineage>
        <taxon>Bacteria</taxon>
        <taxon>Pseudomonadati</taxon>
        <taxon>Pseudomonadota</taxon>
        <taxon>Alphaproteobacteria</taxon>
        <taxon>Acetobacterales</taxon>
        <taxon>Acetobacteraceae</taxon>
        <taxon>Granulibacter</taxon>
    </lineage>
</organism>
<feature type="chain" id="PRO_0000357369" description="Enolase-phosphatase E1">
    <location>
        <begin position="1"/>
        <end position="231"/>
    </location>
</feature>
<sequence>MNPPKAILTDIEGTTTPIAFVHRVLFPYAKANMAGFLAAYSDDEAVAAILAEVEAQYPGRPALETLLGWMDEDAKITPLKALQGLIWREGYRNGALQAQVHPDAAQSLRAWHEAGLNLFVYSSGSVEAQQLLFSYSDQGDLSLLFGGFFDTRIGGKREADSYRHIIANTGMQPQSMLFLSDIEEELDAALDAGLRTCQLVRAGDNGGPPTLRHPHAPDFIAVAHLFGLPHP</sequence>
<comment type="function">
    <text evidence="1">Bifunctional enzyme that catalyzes the enolization of 2,3-diketo-5-methylthiopentyl-1-phosphate (DK-MTP-1-P) into the intermediate 2-hydroxy-3-keto-5-methylthiopentenyl-1-phosphate (HK-MTPenyl-1-P), which is then dephosphorylated to form the acireductone 1,2-dihydroxy-3-keto-5-methylthiopentene (DHK-MTPene).</text>
</comment>
<comment type="catalytic activity">
    <reaction evidence="1">
        <text>5-methylsulfanyl-2,3-dioxopentyl phosphate + H2O = 1,2-dihydroxy-5-(methylsulfanyl)pent-1-en-3-one + phosphate</text>
        <dbReference type="Rhea" id="RHEA:21700"/>
        <dbReference type="ChEBI" id="CHEBI:15377"/>
        <dbReference type="ChEBI" id="CHEBI:43474"/>
        <dbReference type="ChEBI" id="CHEBI:49252"/>
        <dbReference type="ChEBI" id="CHEBI:58828"/>
        <dbReference type="EC" id="3.1.3.77"/>
    </reaction>
</comment>
<comment type="cofactor">
    <cofactor evidence="1">
        <name>Mg(2+)</name>
        <dbReference type="ChEBI" id="CHEBI:18420"/>
    </cofactor>
    <text evidence="1">Binds 1 Mg(2+) ion per subunit.</text>
</comment>
<comment type="pathway">
    <text evidence="1">Amino-acid biosynthesis; L-methionine biosynthesis via salvage pathway; L-methionine from S-methyl-5-thio-alpha-D-ribose 1-phosphate: step 3/6.</text>
</comment>
<comment type="pathway">
    <text evidence="1">Amino-acid biosynthesis; L-methionine biosynthesis via salvage pathway; L-methionine from S-methyl-5-thio-alpha-D-ribose 1-phosphate: step 4/6.</text>
</comment>
<comment type="subunit">
    <text evidence="1">Monomer.</text>
</comment>
<comment type="similarity">
    <text evidence="1">Belongs to the HAD-like hydrolase superfamily. MasA/MtnC family.</text>
</comment>
<keyword id="KW-0028">Amino-acid biosynthesis</keyword>
<keyword id="KW-0378">Hydrolase</keyword>
<keyword id="KW-0460">Magnesium</keyword>
<keyword id="KW-0479">Metal-binding</keyword>
<keyword id="KW-0486">Methionine biosynthesis</keyword>
<keyword id="KW-1185">Reference proteome</keyword>
<protein>
    <recommendedName>
        <fullName evidence="1">Enolase-phosphatase E1</fullName>
        <ecNumber evidence="1">3.1.3.77</ecNumber>
    </recommendedName>
    <alternativeName>
        <fullName evidence="1">2,3-diketo-5-methylthio-1-phosphopentane phosphatase</fullName>
    </alternativeName>
</protein>
<proteinExistence type="inferred from homology"/>
<gene>
    <name evidence="1" type="primary">mtnC</name>
    <name type="ordered locus">GbCGDNIH1_2267</name>
</gene>
<reference key="1">
    <citation type="journal article" date="2007" name="J. Bacteriol.">
        <title>Genome sequence analysis of the emerging human pathogenic acetic acid bacterium Granulibacter bethesdensis.</title>
        <authorList>
            <person name="Greenberg D.E."/>
            <person name="Porcella S.F."/>
            <person name="Zelazny A.M."/>
            <person name="Virtaneva K."/>
            <person name="Sturdevant D.E."/>
            <person name="Kupko J.J. III"/>
            <person name="Barbian K.D."/>
            <person name="Babar A."/>
            <person name="Dorward D.W."/>
            <person name="Holland S.M."/>
        </authorList>
    </citation>
    <scope>NUCLEOTIDE SEQUENCE [LARGE SCALE GENOMIC DNA]</scope>
    <source>
        <strain>ATCC BAA-1260 / CGDNIH1</strain>
    </source>
</reference>
<name>MTNC_GRABC</name>
<dbReference type="EC" id="3.1.3.77" evidence="1"/>
<dbReference type="EMBL" id="CP000394">
    <property type="protein sequence ID" value="ABI63165.1"/>
    <property type="molecule type" value="Genomic_DNA"/>
</dbReference>
<dbReference type="RefSeq" id="WP_011632967.1">
    <property type="nucleotide sequence ID" value="NC_008343.2"/>
</dbReference>
<dbReference type="SMR" id="Q0BPT7"/>
<dbReference type="STRING" id="391165.GbCGDNIH1_2267"/>
<dbReference type="KEGG" id="gbe:GbCGDNIH1_2267"/>
<dbReference type="eggNOG" id="COG4229">
    <property type="taxonomic scope" value="Bacteria"/>
</dbReference>
<dbReference type="HOGENOM" id="CLU_023273_0_0_5"/>
<dbReference type="OrthoDB" id="9797416at2"/>
<dbReference type="UniPathway" id="UPA00904">
    <property type="reaction ID" value="UER00876"/>
</dbReference>
<dbReference type="UniPathway" id="UPA00904">
    <property type="reaction ID" value="UER00877"/>
</dbReference>
<dbReference type="Proteomes" id="UP000001963">
    <property type="component" value="Chromosome"/>
</dbReference>
<dbReference type="GO" id="GO:0043715">
    <property type="term" value="F:2,3-diketo-5-methylthiopentyl-1-phosphate enolase activity"/>
    <property type="evidence" value="ECO:0007669"/>
    <property type="project" value="UniProtKB-UniRule"/>
</dbReference>
<dbReference type="GO" id="GO:0043716">
    <property type="term" value="F:2-hydroxy-3-keto-5-methylthiopentenyl-1-phosphate phosphatase activity"/>
    <property type="evidence" value="ECO:0007669"/>
    <property type="project" value="UniProtKB-UniRule"/>
</dbReference>
<dbReference type="GO" id="GO:0043874">
    <property type="term" value="F:acireductone synthase activity"/>
    <property type="evidence" value="ECO:0007669"/>
    <property type="project" value="UniProtKB-EC"/>
</dbReference>
<dbReference type="GO" id="GO:0000287">
    <property type="term" value="F:magnesium ion binding"/>
    <property type="evidence" value="ECO:0007669"/>
    <property type="project" value="UniProtKB-UniRule"/>
</dbReference>
<dbReference type="GO" id="GO:0019509">
    <property type="term" value="P:L-methionine salvage from methylthioadenosine"/>
    <property type="evidence" value="ECO:0007669"/>
    <property type="project" value="UniProtKB-UniRule"/>
</dbReference>
<dbReference type="CDD" id="cd01629">
    <property type="entry name" value="HAD_EP"/>
    <property type="match status" value="1"/>
</dbReference>
<dbReference type="Gene3D" id="1.10.720.60">
    <property type="match status" value="1"/>
</dbReference>
<dbReference type="Gene3D" id="3.40.50.1000">
    <property type="entry name" value="HAD superfamily/HAD-like"/>
    <property type="match status" value="1"/>
</dbReference>
<dbReference type="HAMAP" id="MF_01681">
    <property type="entry name" value="Salvage_MtnC"/>
    <property type="match status" value="1"/>
</dbReference>
<dbReference type="InterPro" id="IPR023943">
    <property type="entry name" value="Enolase-ppase_E1"/>
</dbReference>
<dbReference type="InterPro" id="IPR036412">
    <property type="entry name" value="HAD-like_sf"/>
</dbReference>
<dbReference type="InterPro" id="IPR006439">
    <property type="entry name" value="HAD-SF_hydro_IA"/>
</dbReference>
<dbReference type="InterPro" id="IPR023214">
    <property type="entry name" value="HAD_sf"/>
</dbReference>
<dbReference type="NCBIfam" id="TIGR01691">
    <property type="entry name" value="enolase-ppase"/>
    <property type="match status" value="1"/>
</dbReference>
<dbReference type="NCBIfam" id="TIGR01549">
    <property type="entry name" value="HAD-SF-IA-v1"/>
    <property type="match status" value="1"/>
</dbReference>
<dbReference type="PANTHER" id="PTHR20371">
    <property type="entry name" value="ENOLASE-PHOSPHATASE E1"/>
    <property type="match status" value="1"/>
</dbReference>
<dbReference type="PANTHER" id="PTHR20371:SF1">
    <property type="entry name" value="ENOLASE-PHOSPHATASE E1"/>
    <property type="match status" value="1"/>
</dbReference>
<dbReference type="Pfam" id="PF00702">
    <property type="entry name" value="Hydrolase"/>
    <property type="match status" value="1"/>
</dbReference>
<dbReference type="SFLD" id="SFLDG01133">
    <property type="entry name" value="C1.5.4:_Enolase-phosphatase_Li"/>
    <property type="match status" value="1"/>
</dbReference>
<dbReference type="SFLD" id="SFLDF00044">
    <property type="entry name" value="enolase-phosphatase"/>
    <property type="match status" value="1"/>
</dbReference>
<dbReference type="SUPFAM" id="SSF56784">
    <property type="entry name" value="HAD-like"/>
    <property type="match status" value="1"/>
</dbReference>
<evidence type="ECO:0000255" key="1">
    <source>
        <dbReference type="HAMAP-Rule" id="MF_01681"/>
    </source>
</evidence>
<accession>Q0BPT7</accession>